<accession>B4T868</accession>
<name>GLGC_SALHS</name>
<comment type="function">
    <text evidence="1">Involved in the biosynthesis of ADP-glucose, a building block required for the elongation reactions to produce glycogen. Catalyzes the reaction between ATP and alpha-D-glucose 1-phosphate (G1P) to produce pyrophosphate and ADP-Glc.</text>
</comment>
<comment type="catalytic activity">
    <reaction evidence="1">
        <text>alpha-D-glucose 1-phosphate + ATP + H(+) = ADP-alpha-D-glucose + diphosphate</text>
        <dbReference type="Rhea" id="RHEA:12120"/>
        <dbReference type="ChEBI" id="CHEBI:15378"/>
        <dbReference type="ChEBI" id="CHEBI:30616"/>
        <dbReference type="ChEBI" id="CHEBI:33019"/>
        <dbReference type="ChEBI" id="CHEBI:57498"/>
        <dbReference type="ChEBI" id="CHEBI:58601"/>
        <dbReference type="EC" id="2.7.7.27"/>
    </reaction>
</comment>
<comment type="activity regulation">
    <text evidence="1">Allosterically activated by fructose-1,6-bisphosphate (F16BP) and inhibited by AMP.</text>
</comment>
<comment type="pathway">
    <text evidence="1">Glycan biosynthesis; glycogen biosynthesis.</text>
</comment>
<comment type="subunit">
    <text evidence="1">Homotetramer.</text>
</comment>
<comment type="similarity">
    <text evidence="1">Belongs to the bacterial/plant glucose-1-phosphate adenylyltransferase family.</text>
</comment>
<proteinExistence type="inferred from homology"/>
<feature type="chain" id="PRO_1000130500" description="Glucose-1-phosphate adenylyltransferase">
    <location>
        <begin position="1"/>
        <end position="431"/>
    </location>
</feature>
<feature type="binding site" evidence="1">
    <location>
        <position position="39"/>
    </location>
    <ligand>
        <name>beta-D-fructose 1,6-bisphosphate</name>
        <dbReference type="ChEBI" id="CHEBI:32966"/>
    </ligand>
</feature>
<feature type="binding site" evidence="1">
    <location>
        <position position="40"/>
    </location>
    <ligand>
        <name>AMP</name>
        <dbReference type="ChEBI" id="CHEBI:456215"/>
    </ligand>
</feature>
<feature type="binding site" evidence="1">
    <location>
        <position position="46"/>
    </location>
    <ligand>
        <name>AMP</name>
        <dbReference type="ChEBI" id="CHEBI:456215"/>
    </ligand>
</feature>
<feature type="binding site" evidence="1">
    <location>
        <position position="52"/>
    </location>
    <ligand>
        <name>AMP</name>
        <dbReference type="ChEBI" id="CHEBI:456215"/>
    </ligand>
</feature>
<feature type="binding site" evidence="1">
    <location>
        <position position="114"/>
    </location>
    <ligand>
        <name>alpha-D-glucose 1-phosphate</name>
        <dbReference type="ChEBI" id="CHEBI:58601"/>
    </ligand>
</feature>
<feature type="binding site" evidence="1">
    <location>
        <position position="130"/>
    </location>
    <ligand>
        <name>AMP</name>
        <dbReference type="ChEBI" id="CHEBI:456215"/>
    </ligand>
</feature>
<feature type="binding site" evidence="1">
    <location>
        <position position="179"/>
    </location>
    <ligand>
        <name>alpha-D-glucose 1-phosphate</name>
        <dbReference type="ChEBI" id="CHEBI:58601"/>
    </ligand>
</feature>
<feature type="binding site" evidence="1">
    <location>
        <begin position="194"/>
        <end position="195"/>
    </location>
    <ligand>
        <name>alpha-D-glucose 1-phosphate</name>
        <dbReference type="ChEBI" id="CHEBI:58601"/>
    </ligand>
</feature>
<feature type="binding site" evidence="1">
    <location>
        <position position="212"/>
    </location>
    <ligand>
        <name>alpha-D-glucose 1-phosphate</name>
        <dbReference type="ChEBI" id="CHEBI:58601"/>
    </ligand>
</feature>
<feature type="binding site" evidence="1">
    <location>
        <position position="370"/>
    </location>
    <ligand>
        <name>AMP</name>
        <dbReference type="ChEBI" id="CHEBI:456215"/>
    </ligand>
</feature>
<feature type="binding site" evidence="1">
    <location>
        <position position="386"/>
    </location>
    <ligand>
        <name>AMP</name>
        <dbReference type="ChEBI" id="CHEBI:456215"/>
    </ligand>
</feature>
<feature type="binding site" evidence="1">
    <location>
        <begin position="419"/>
        <end position="423"/>
    </location>
    <ligand>
        <name>beta-D-fructose 1,6-bisphosphate</name>
        <dbReference type="ChEBI" id="CHEBI:32966"/>
    </ligand>
</feature>
<feature type="binding site" evidence="1">
    <location>
        <begin position="429"/>
        <end position="431"/>
    </location>
    <ligand>
        <name>beta-D-fructose 1,6-bisphosphate</name>
        <dbReference type="ChEBI" id="CHEBI:32966"/>
    </ligand>
</feature>
<feature type="site" description="Could play a key role in the communication between the regulatory and the substrate sites" evidence="1">
    <location>
        <position position="74"/>
    </location>
</feature>
<feature type="site" description="Could play a key role in the communication between the regulatory and the substrate sites" evidence="1">
    <location>
        <position position="113"/>
    </location>
</feature>
<dbReference type="EC" id="2.7.7.27" evidence="1"/>
<dbReference type="EMBL" id="CP001120">
    <property type="protein sequence ID" value="ACF67669.1"/>
    <property type="molecule type" value="Genomic_DNA"/>
</dbReference>
<dbReference type="RefSeq" id="WP_000253995.1">
    <property type="nucleotide sequence ID" value="NC_011083.1"/>
</dbReference>
<dbReference type="SMR" id="B4T868"/>
<dbReference type="KEGG" id="seh:SeHA_C3845"/>
<dbReference type="HOGENOM" id="CLU_029499_14_1_6"/>
<dbReference type="UniPathway" id="UPA00164"/>
<dbReference type="Proteomes" id="UP000001866">
    <property type="component" value="Chromosome"/>
</dbReference>
<dbReference type="GO" id="GO:0005524">
    <property type="term" value="F:ATP binding"/>
    <property type="evidence" value="ECO:0007669"/>
    <property type="project" value="UniProtKB-KW"/>
</dbReference>
<dbReference type="GO" id="GO:0008878">
    <property type="term" value="F:glucose-1-phosphate adenylyltransferase activity"/>
    <property type="evidence" value="ECO:0007669"/>
    <property type="project" value="UniProtKB-UniRule"/>
</dbReference>
<dbReference type="GO" id="GO:0005978">
    <property type="term" value="P:glycogen biosynthetic process"/>
    <property type="evidence" value="ECO:0007669"/>
    <property type="project" value="UniProtKB-UniRule"/>
</dbReference>
<dbReference type="CDD" id="cd02508">
    <property type="entry name" value="ADP_Glucose_PP"/>
    <property type="match status" value="1"/>
</dbReference>
<dbReference type="CDD" id="cd04651">
    <property type="entry name" value="LbH_G1P_AT_C"/>
    <property type="match status" value="1"/>
</dbReference>
<dbReference type="FunFam" id="2.160.10.10:FF:000006">
    <property type="entry name" value="Glucose-1-phosphate adenylyltransferase"/>
    <property type="match status" value="1"/>
</dbReference>
<dbReference type="FunFam" id="3.90.550.10:FF:000014">
    <property type="entry name" value="Glucose-1-phosphate adenylyltransferase"/>
    <property type="match status" value="1"/>
</dbReference>
<dbReference type="Gene3D" id="2.160.10.10">
    <property type="entry name" value="Hexapeptide repeat proteins"/>
    <property type="match status" value="1"/>
</dbReference>
<dbReference type="Gene3D" id="3.90.550.10">
    <property type="entry name" value="Spore Coat Polysaccharide Biosynthesis Protein SpsA, Chain A"/>
    <property type="match status" value="1"/>
</dbReference>
<dbReference type="HAMAP" id="MF_00624">
    <property type="entry name" value="GlgC"/>
    <property type="match status" value="1"/>
</dbReference>
<dbReference type="InterPro" id="IPR011831">
    <property type="entry name" value="ADP-Glc_PPase"/>
</dbReference>
<dbReference type="InterPro" id="IPR005836">
    <property type="entry name" value="ADP_Glu_pyroP_CS"/>
</dbReference>
<dbReference type="InterPro" id="IPR023049">
    <property type="entry name" value="GlgC_bac"/>
</dbReference>
<dbReference type="InterPro" id="IPR056818">
    <property type="entry name" value="GlmU/GlgC-like_hexapep"/>
</dbReference>
<dbReference type="InterPro" id="IPR005835">
    <property type="entry name" value="NTP_transferase_dom"/>
</dbReference>
<dbReference type="InterPro" id="IPR029044">
    <property type="entry name" value="Nucleotide-diphossugar_trans"/>
</dbReference>
<dbReference type="InterPro" id="IPR011004">
    <property type="entry name" value="Trimer_LpxA-like_sf"/>
</dbReference>
<dbReference type="NCBIfam" id="TIGR02091">
    <property type="entry name" value="glgC"/>
    <property type="match status" value="1"/>
</dbReference>
<dbReference type="NCBIfam" id="NF001947">
    <property type="entry name" value="PRK00725.1"/>
    <property type="match status" value="1"/>
</dbReference>
<dbReference type="NCBIfam" id="NF002023">
    <property type="entry name" value="PRK00844.1"/>
    <property type="match status" value="1"/>
</dbReference>
<dbReference type="PANTHER" id="PTHR43523:SF2">
    <property type="entry name" value="GLUCOSE-1-PHOSPHATE ADENYLYLTRANSFERASE"/>
    <property type="match status" value="1"/>
</dbReference>
<dbReference type="PANTHER" id="PTHR43523">
    <property type="entry name" value="GLUCOSE-1-PHOSPHATE ADENYLYLTRANSFERASE-RELATED"/>
    <property type="match status" value="1"/>
</dbReference>
<dbReference type="Pfam" id="PF24894">
    <property type="entry name" value="Hexapep_GlmU"/>
    <property type="match status" value="1"/>
</dbReference>
<dbReference type="Pfam" id="PF00483">
    <property type="entry name" value="NTP_transferase"/>
    <property type="match status" value="1"/>
</dbReference>
<dbReference type="SUPFAM" id="SSF53448">
    <property type="entry name" value="Nucleotide-diphospho-sugar transferases"/>
    <property type="match status" value="1"/>
</dbReference>
<dbReference type="SUPFAM" id="SSF51161">
    <property type="entry name" value="Trimeric LpxA-like enzymes"/>
    <property type="match status" value="1"/>
</dbReference>
<dbReference type="PROSITE" id="PS00808">
    <property type="entry name" value="ADP_GLC_PYROPHOSPH_1"/>
    <property type="match status" value="1"/>
</dbReference>
<dbReference type="PROSITE" id="PS00809">
    <property type="entry name" value="ADP_GLC_PYROPHOSPH_2"/>
    <property type="match status" value="1"/>
</dbReference>
<dbReference type="PROSITE" id="PS00810">
    <property type="entry name" value="ADP_GLC_PYROPHOSPH_3"/>
    <property type="match status" value="1"/>
</dbReference>
<evidence type="ECO:0000255" key="1">
    <source>
        <dbReference type="HAMAP-Rule" id="MF_00624"/>
    </source>
</evidence>
<gene>
    <name evidence="1" type="primary">glgC</name>
    <name type="ordered locus">SeHA_C3845</name>
</gene>
<sequence>MVSLEKNDRVMLARQLPLKSVALILAGGRGTRLKDLTNKRAKPAVHFGGKFRIIDFALSNCLNSGIRRIGVITQYQSHTLVQHIQRGWSLFSEEMNEFVDLLPAQQRMKGENWYRGTADAVTQNLDIIRRYKAEYVVILAGDHIYKQDYSRMLIDHVEKGARCTVACMPVPIKEATAFGVMAVDESDKIIDFVEKPANPPAMPGDASKSLASMGIYVFDADYLYELLAADDKDDASSHDFGKDIIPKITREGMAYAHPFPLSCVQSDPQAEPYWRDVGTLEAYWKANLDLASVTPELDMYDQNWPIRTHMESLPPAKFVQDRSGSHGMTLNSLVSGGCIISGSVVVQSVLFPRVRINSFCNIDSAVLLPEVWVGRSCRLRRCVIDRACIIPEGMVIGENAEEDARRFYRSEEGIVLVTREMLRKLQVKQER</sequence>
<reference key="1">
    <citation type="journal article" date="2011" name="J. Bacteriol.">
        <title>Comparative genomics of 28 Salmonella enterica isolates: evidence for CRISPR-mediated adaptive sublineage evolution.</title>
        <authorList>
            <person name="Fricke W.F."/>
            <person name="Mammel M.K."/>
            <person name="McDermott P.F."/>
            <person name="Tartera C."/>
            <person name="White D.G."/>
            <person name="Leclerc J.E."/>
            <person name="Ravel J."/>
            <person name="Cebula T.A."/>
        </authorList>
    </citation>
    <scope>NUCLEOTIDE SEQUENCE [LARGE SCALE GENOMIC DNA]</scope>
    <source>
        <strain>SL476</strain>
    </source>
</reference>
<protein>
    <recommendedName>
        <fullName evidence="1">Glucose-1-phosphate adenylyltransferase</fullName>
        <ecNumber evidence="1">2.7.7.27</ecNumber>
    </recommendedName>
    <alternativeName>
        <fullName evidence="1">ADP-glucose pyrophosphorylase</fullName>
        <shortName evidence="1">ADPGlc PPase</shortName>
    </alternativeName>
    <alternativeName>
        <fullName evidence="1">ADP-glucose synthase</fullName>
    </alternativeName>
</protein>
<organism>
    <name type="scientific">Salmonella heidelberg (strain SL476)</name>
    <dbReference type="NCBI Taxonomy" id="454169"/>
    <lineage>
        <taxon>Bacteria</taxon>
        <taxon>Pseudomonadati</taxon>
        <taxon>Pseudomonadota</taxon>
        <taxon>Gammaproteobacteria</taxon>
        <taxon>Enterobacterales</taxon>
        <taxon>Enterobacteriaceae</taxon>
        <taxon>Salmonella</taxon>
    </lineage>
</organism>
<keyword id="KW-0021">Allosteric enzyme</keyword>
<keyword id="KW-0067">ATP-binding</keyword>
<keyword id="KW-0119">Carbohydrate metabolism</keyword>
<keyword id="KW-0320">Glycogen biosynthesis</keyword>
<keyword id="KW-0321">Glycogen metabolism</keyword>
<keyword id="KW-0547">Nucleotide-binding</keyword>
<keyword id="KW-0548">Nucleotidyltransferase</keyword>
<keyword id="KW-0808">Transferase</keyword>